<keyword id="KW-0025">Alternative splicing</keyword>
<keyword id="KW-1003">Cell membrane</keyword>
<keyword id="KW-1015">Disulfide bond</keyword>
<keyword id="KW-0297">G-protein coupled receptor</keyword>
<keyword id="KW-0325">Glycoprotein</keyword>
<keyword id="KW-0472">Membrane</keyword>
<keyword id="KW-0675">Receptor</keyword>
<keyword id="KW-1185">Reference proteome</keyword>
<keyword id="KW-0732">Signal</keyword>
<keyword id="KW-0807">Transducer</keyword>
<keyword id="KW-0812">Transmembrane</keyword>
<keyword id="KW-1133">Transmembrane helix</keyword>
<gene>
    <name evidence="6 9" type="primary">Adgrg5</name>
    <name evidence="9" type="synonym">Gm1109</name>
    <name evidence="6" type="synonym">Gpr114</name>
    <name type="synonym">Pgr27</name>
</gene>
<comment type="function">
    <text evidence="4">Orphan adhesion G-protein coupled receptor (aGPCR) (PubMed:22575658). Ligand binding causes a conformation change that triggers signaling via guanine nucleotide-binding proteins (G proteins) and modulates the activity of downstream effectors, such as adenylate cyclase (PubMed:22575658). ADGRG5 is specifically coupled to G(s) G proteins and mediates activation of adenylate cyclase activity (PubMed:22575658).</text>
</comment>
<comment type="function">
    <molecule>Isoform 1</molecule>
    <text evidence="5">Isoform 1, but not isoform 2, is constitutively active, as evidenced by elevated basal cAMP levels, and responds to mechanical activation (shaking).</text>
</comment>
<comment type="activity regulation">
    <text evidence="1">Forms a heterodimer of 2 chains generated by proteolytic processing that remain associated through non-covalent interactions mediated by the GAIN-B domain (By similarity). In the inactivated receptor, the Stachel sequence (also named stalk) is embedded in the GAIN-B domain, where it adopts a beta-strand conformation (By similarity). On activation, the Stachel moves into the 7 transmembrane region and adopts a twisted hook-shaped configuration that forms contacts within the receptor, leading to coupling of a G-alpha protein, which activates signaling (By similarity). The cleaved GAIN-B and N-terminal domains can then dissociate from the rest of the receptor (By similarity).</text>
</comment>
<comment type="subunit">
    <text evidence="3">Heterodimer of 2 chains generated by proteolytic processing; the large extracellular N-terminal fragment and the membrane-bound C-terminal fragment predominantly remain associated and non-covalently linked.</text>
</comment>
<comment type="subcellular location">
    <subcellularLocation>
        <location evidence="5">Cell membrane</location>
        <topology evidence="2">Multi-pass membrane protein</topology>
    </subcellularLocation>
</comment>
<comment type="alternative products">
    <event type="alternative splicing"/>
    <isoform>
        <id>Q3V3Z3-1</id>
        <name>1</name>
        <sequence type="displayed"/>
    </isoform>
    <isoform>
        <id>Q3V3Z3-2</id>
        <name>2</name>
        <sequence type="described" ref="VSP_058541"/>
    </isoform>
</comment>
<comment type="tissue specificity">
    <text evidence="5">Expressed at least in kidney, heart, brain and spleen.</text>
</comment>
<comment type="tissue specificity">
    <molecule>Isoform 1</molecule>
    <text evidence="5">Isoform 1 is predominant in spleen. In the kidney, both isoform 1 and isoform 2 are expressed at similar levels.</text>
</comment>
<comment type="tissue specificity">
    <molecule>Isoform 2</molecule>
    <text evidence="5">Isoform 2 is the major form in heart and brain. In the kidney, both isoform 1 and isoform 2 are expressed at similar levels.</text>
</comment>
<comment type="domain">
    <text evidence="1">The Stachel sequence (also named stalk) in the C-terminal part of the extracellular domain (ECD) functions as a tethered agonist. In the inactivated receptor, the Stachel sequence (also named stalk) is embedded in the GAIN-B domain, where it adopts a beta-strand conformation. On activation, the Stachel moves into the 7 transmembrane region and adopts a twisted hook-shaped configuration that forms contacts within the receptor, leading to coupling of a G-alpha protein, which activates signaling.</text>
</comment>
<comment type="PTM">
    <text evidence="1 3">Autoproteolytically processed at the GPS region of the GAIN-B domain; this cleavage modulates receptor activity.</text>
</comment>
<comment type="miscellaneous">
    <molecule>Isoform 2</molecule>
    <text evidence="7">May be due to competing acceptor splice site.</text>
</comment>
<comment type="similarity">
    <text evidence="7">Belongs to the G-protein coupled receptor 2 family. Adhesion G-protein coupled receptor (ADGR) subfamily.</text>
</comment>
<sequence>MDPHGALFFYLCLLAAQVVLVETLSDLLVLMKRLEQPVGRGLSSRARHIHSLEQKLLNASFGGHNLTLQTNSIQSLVFKLSCDFPGLSLSSTTLTNVSQVRAPHAMQFPAELTKGACVTSRPAELRLICIYFFTAHLFQDDRNSSLLNNYVLGAQLDHRPVNNLQKPVNISFWHNRSLEGYTVSCVFWKEGASKSSWGAWSPEGCYTEQPSATQVLCHCNHLTYFAVLMQLSGDPVPAELQVPLEYISFVGCSISIVASLLTILLYAQSRKQSDSTTRIHMNLNGSVLLLNVTFLLSSQMTLPTMPRPVCKVLAAVLHYALLSSLTWMAIEGFNLYLFLGRVYNAYIRRYLLKLCMLGWGFPALLVLLLLMIKSSVYGPCVTSLSKSQENGTGFQNVSMCWIRSPMVHSILVMGYGGFTSLFNLVVLAWALWILCRLRAREKALSPWAYRDTAMVLGLTVLLGTTWTLAFFSFGVFLLPQLFLFTIFNSLYGFFLFLWFCSQKRYSDAEAKAEMEAVSSSQMTH</sequence>
<feature type="signal peptide" evidence="2">
    <location>
        <begin position="1"/>
        <end position="23"/>
    </location>
</feature>
<feature type="chain" id="PRO_0000288638" description="Adhesion G-protein coupled receptor G5">
    <location>
        <begin position="24"/>
        <end position="524"/>
    </location>
</feature>
<feature type="chain" id="PRO_0000462393" description="Adhesion G-protein coupled receptor G5, N-terminal fragment" evidence="7">
    <location>
        <begin position="24"/>
        <end position="222"/>
    </location>
</feature>
<feature type="chain" id="PRO_0000462394" description="Adhesion G-protein coupled receptor G5, C-terminal fragment" evidence="7">
    <location>
        <begin position="223"/>
        <end position="524"/>
    </location>
</feature>
<feature type="topological domain" description="Extracellular" evidence="7">
    <location>
        <begin position="24"/>
        <end position="246"/>
    </location>
</feature>
<feature type="transmembrane region" description="Helical; Name=1" evidence="2">
    <location>
        <begin position="247"/>
        <end position="267"/>
    </location>
</feature>
<feature type="topological domain" description="Cytoplasmic" evidence="7">
    <location>
        <begin position="268"/>
        <end position="284"/>
    </location>
</feature>
<feature type="transmembrane region" description="Helical; Name=2" evidence="2">
    <location>
        <begin position="285"/>
        <end position="305"/>
    </location>
</feature>
<feature type="topological domain" description="Extracellular" evidence="7">
    <location>
        <begin position="306"/>
        <end position="319"/>
    </location>
</feature>
<feature type="transmembrane region" description="Helical; Name=3" evidence="2">
    <location>
        <begin position="320"/>
        <end position="340"/>
    </location>
</feature>
<feature type="topological domain" description="Cytoplasmic" evidence="7">
    <location>
        <begin position="341"/>
        <end position="351"/>
    </location>
</feature>
<feature type="transmembrane region" description="Helical; Name=4" evidence="2">
    <location>
        <begin position="352"/>
        <end position="372"/>
    </location>
</feature>
<feature type="topological domain" description="Extracellular" evidence="7">
    <location>
        <begin position="373"/>
        <end position="413"/>
    </location>
</feature>
<feature type="transmembrane region" description="Helical; Name=5" evidence="2">
    <location>
        <begin position="414"/>
        <end position="434"/>
    </location>
</feature>
<feature type="topological domain" description="Cytoplasmic" evidence="7">
    <location>
        <begin position="435"/>
        <end position="453"/>
    </location>
</feature>
<feature type="transmembrane region" description="Helical; Name=6" evidence="2">
    <location>
        <begin position="454"/>
        <end position="476"/>
    </location>
</feature>
<feature type="topological domain" description="Extracellular" evidence="7">
    <location>
        <begin position="477"/>
        <end position="480"/>
    </location>
</feature>
<feature type="transmembrane region" description="Helical; Name=7" evidence="2">
    <location>
        <begin position="481"/>
        <end position="500"/>
    </location>
</feature>
<feature type="topological domain" description="Cytoplasmic" evidence="7">
    <location>
        <begin position="501"/>
        <end position="524"/>
    </location>
</feature>
<feature type="domain" description="GAIN-B" evidence="3">
    <location>
        <begin position="74"/>
        <end position="235"/>
    </location>
</feature>
<feature type="region of interest" description="GPS" evidence="3">
    <location>
        <begin position="185"/>
        <end position="235"/>
    </location>
</feature>
<feature type="region of interest" description="Stachel" evidence="1">
    <location>
        <begin position="224"/>
        <end position="232"/>
    </location>
</feature>
<feature type="site" description="Cleavage; by autolysis" evidence="3 8">
    <location>
        <begin position="222"/>
        <end position="223"/>
    </location>
</feature>
<feature type="glycosylation site" description="N-linked (GlcNAc...) asparagine" evidence="2">
    <location>
        <position position="58"/>
    </location>
</feature>
<feature type="glycosylation site" description="N-linked (GlcNAc...) asparagine" evidence="2">
    <location>
        <position position="65"/>
    </location>
</feature>
<feature type="glycosylation site" description="N-linked (GlcNAc...) asparagine" evidence="2">
    <location>
        <position position="96"/>
    </location>
</feature>
<feature type="glycosylation site" description="N-linked (GlcNAc...) asparagine" evidence="2">
    <location>
        <position position="143"/>
    </location>
</feature>
<feature type="glycosylation site" description="N-linked (GlcNAc...) asparagine" evidence="2">
    <location>
        <position position="169"/>
    </location>
</feature>
<feature type="glycosylation site" description="N-linked (GlcNAc...) asparagine" evidence="2">
    <location>
        <position position="175"/>
    </location>
</feature>
<feature type="glycosylation site" description="N-linked (GlcNAc...) asparagine" evidence="2">
    <location>
        <position position="390"/>
    </location>
</feature>
<feature type="glycosylation site" description="N-linked (GlcNAc...) asparagine" evidence="2">
    <location>
        <position position="396"/>
    </location>
</feature>
<feature type="disulfide bond" evidence="3">
    <location>
        <begin position="185"/>
        <end position="217"/>
    </location>
</feature>
<feature type="disulfide bond" evidence="3">
    <location>
        <begin position="205"/>
        <end position="219"/>
    </location>
</feature>
<feature type="disulfide bond" evidence="1">
    <location>
        <begin position="310"/>
        <end position="400"/>
    </location>
</feature>
<feature type="splice variant" id="VSP_058541" description="In isoform 2.">
    <location>
        <position position="230"/>
    </location>
</feature>
<feature type="mutagenesis site" description="Drastic decrease in basal cAMP production." evidence="5">
    <location>
        <position position="222"/>
    </location>
</feature>
<feature type="mutagenesis site" description="Drastic reduction in basal cAMP production." evidence="5">
    <original>Q</original>
    <variation>A</variation>
    <variation>C</variation>
    <variation>D</variation>
    <variation>E</variation>
    <variation>G</variation>
    <variation>F</variation>
    <variation>H</variation>
    <variation>I</variation>
    <variation>L</variation>
    <variation>M</variation>
    <variation>P</variation>
    <variation>W</variation>
    <variation>Y</variation>
    <location>
        <position position="230"/>
    </location>
</feature>
<feature type="mutagenesis site" description="No effect on basal cAMP production." evidence="5">
    <original>Q</original>
    <variation>K</variation>
    <variation>N</variation>
    <variation>R</variation>
    <variation>S</variation>
    <location>
        <position position="230"/>
    </location>
</feature>
<feature type="mutagenesis site" description="Small reduction in basal cAMP production." evidence="5">
    <original>Q</original>
    <variation>T</variation>
    <variation>V</variation>
    <location>
        <position position="230"/>
    </location>
</feature>
<feature type="sequence conflict" description="In Ref. 1; BAE20445." evidence="7" ref="1">
    <original>K</original>
    <variation>N</variation>
    <location>
        <position position="79"/>
    </location>
</feature>
<organism>
    <name type="scientific">Mus musculus</name>
    <name type="common">Mouse</name>
    <dbReference type="NCBI Taxonomy" id="10090"/>
    <lineage>
        <taxon>Eukaryota</taxon>
        <taxon>Metazoa</taxon>
        <taxon>Chordata</taxon>
        <taxon>Craniata</taxon>
        <taxon>Vertebrata</taxon>
        <taxon>Euteleostomi</taxon>
        <taxon>Mammalia</taxon>
        <taxon>Eutheria</taxon>
        <taxon>Euarchontoglires</taxon>
        <taxon>Glires</taxon>
        <taxon>Rodentia</taxon>
        <taxon>Myomorpha</taxon>
        <taxon>Muroidea</taxon>
        <taxon>Muridae</taxon>
        <taxon>Murinae</taxon>
        <taxon>Mus</taxon>
        <taxon>Mus</taxon>
    </lineage>
</organism>
<dbReference type="EMBL" id="AK028878">
    <property type="protein sequence ID" value="BAE20445.1"/>
    <property type="molecule type" value="mRNA"/>
</dbReference>
<dbReference type="EMBL" id="AC129606">
    <property type="status" value="NOT_ANNOTATED_CDS"/>
    <property type="molecule type" value="Genomic_DNA"/>
</dbReference>
<dbReference type="EMBL" id="CH466525">
    <property type="protein sequence ID" value="EDL11153.1"/>
    <property type="molecule type" value="Genomic_DNA"/>
</dbReference>
<dbReference type="EMBL" id="BC144851">
    <property type="protein sequence ID" value="AAI44852.1"/>
    <property type="molecule type" value="mRNA"/>
</dbReference>
<dbReference type="EMBL" id="BC145803">
    <property type="protein sequence ID" value="AAI45804.1"/>
    <property type="molecule type" value="mRNA"/>
</dbReference>
<dbReference type="CCDS" id="CCDS22552.1">
    <molecule id="Q3V3Z3-2"/>
</dbReference>
<dbReference type="CCDS" id="CCDS52637.1">
    <molecule id="Q3V3Z3-1"/>
</dbReference>
<dbReference type="RefSeq" id="NP_001028640.2">
    <molecule id="Q3V3Z3-2"/>
    <property type="nucleotide sequence ID" value="NM_001033468.3"/>
</dbReference>
<dbReference type="RefSeq" id="NP_001139444.1">
    <molecule id="Q3V3Z3-1"/>
    <property type="nucleotide sequence ID" value="NM_001145972.1"/>
</dbReference>
<dbReference type="RefSeq" id="XP_011246724.1">
    <molecule id="Q3V3Z3-2"/>
    <property type="nucleotide sequence ID" value="XM_011248422.1"/>
</dbReference>
<dbReference type="RefSeq" id="XP_017168373.1">
    <molecule id="Q3V3Z3-1"/>
    <property type="nucleotide sequence ID" value="XM_017312884.1"/>
</dbReference>
<dbReference type="RefSeq" id="XP_017168374.1">
    <molecule id="Q3V3Z3-1"/>
    <property type="nucleotide sequence ID" value="XM_017312885.1"/>
</dbReference>
<dbReference type="RefSeq" id="XP_017168375.1">
    <molecule id="Q3V3Z3-1"/>
    <property type="nucleotide sequence ID" value="XM_017312886.1"/>
</dbReference>
<dbReference type="SMR" id="Q3V3Z3"/>
<dbReference type="FunCoup" id="Q3V3Z3">
    <property type="interactions" value="14"/>
</dbReference>
<dbReference type="STRING" id="10090.ENSMUSP00000132628"/>
<dbReference type="MEROPS" id="P02.016"/>
<dbReference type="GlyCosmos" id="Q3V3Z3">
    <property type="glycosylation" value="8 sites, No reported glycans"/>
</dbReference>
<dbReference type="GlyGen" id="Q3V3Z3">
    <property type="glycosylation" value="8 sites"/>
</dbReference>
<dbReference type="PhosphoSitePlus" id="Q3V3Z3"/>
<dbReference type="PaxDb" id="10090-ENSMUSP00000074155"/>
<dbReference type="ProteomicsDB" id="282037">
    <molecule id="Q3V3Z3-1"/>
</dbReference>
<dbReference type="ProteomicsDB" id="282038">
    <molecule id="Q3V3Z3-2"/>
</dbReference>
<dbReference type="Antibodypedia" id="1937">
    <property type="antibodies" value="68 antibodies from 22 providers"/>
</dbReference>
<dbReference type="Ensembl" id="ENSMUST00000074570.10">
    <molecule id="Q3V3Z3-2"/>
    <property type="protein sequence ID" value="ENSMUSP00000074155.4"/>
    <property type="gene ID" value="ENSMUSG00000061577.13"/>
</dbReference>
<dbReference type="Ensembl" id="ENSMUST00000166802.9">
    <molecule id="Q3V3Z3-1"/>
    <property type="protein sequence ID" value="ENSMUSP00000132628.2"/>
    <property type="gene ID" value="ENSMUSG00000061577.13"/>
</dbReference>
<dbReference type="GeneID" id="382045"/>
<dbReference type="KEGG" id="mmu:382045"/>
<dbReference type="UCSC" id="uc009mxi.2">
    <molecule id="Q3V3Z3-1"/>
    <property type="organism name" value="mouse"/>
</dbReference>
<dbReference type="UCSC" id="uc009mxj.2">
    <property type="organism name" value="mouse"/>
</dbReference>
<dbReference type="AGR" id="MGI:2685955"/>
<dbReference type="CTD" id="221188"/>
<dbReference type="MGI" id="MGI:2685955">
    <property type="gene designation" value="Adgrg5"/>
</dbReference>
<dbReference type="VEuPathDB" id="HostDB:ENSMUSG00000061577"/>
<dbReference type="eggNOG" id="KOG4193">
    <property type="taxonomic scope" value="Eukaryota"/>
</dbReference>
<dbReference type="GeneTree" id="ENSGT00940000161359"/>
<dbReference type="HOGENOM" id="CLU_002753_3_9_1"/>
<dbReference type="InParanoid" id="Q3V3Z3"/>
<dbReference type="OMA" id="RIHVNLH"/>
<dbReference type="OrthoDB" id="283575at2759"/>
<dbReference type="PhylomeDB" id="Q3V3Z3"/>
<dbReference type="TreeFam" id="TF321769"/>
<dbReference type="BioGRID-ORCS" id="382045">
    <property type="hits" value="3 hits in 78 CRISPR screens"/>
</dbReference>
<dbReference type="PRO" id="PR:Q3V3Z3"/>
<dbReference type="Proteomes" id="UP000000589">
    <property type="component" value="Chromosome 8"/>
</dbReference>
<dbReference type="RNAct" id="Q3V3Z3">
    <property type="molecule type" value="protein"/>
</dbReference>
<dbReference type="Bgee" id="ENSMUSG00000061577">
    <property type="expression patterns" value="Expressed in mesenteric lymph node and 49 other cell types or tissues"/>
</dbReference>
<dbReference type="ExpressionAtlas" id="Q3V3Z3">
    <property type="expression patterns" value="baseline and differential"/>
</dbReference>
<dbReference type="GO" id="GO:0005886">
    <property type="term" value="C:plasma membrane"/>
    <property type="evidence" value="ECO:0000314"/>
    <property type="project" value="UniProtKB"/>
</dbReference>
<dbReference type="GO" id="GO:0004930">
    <property type="term" value="F:G protein-coupled receptor activity"/>
    <property type="evidence" value="ECO:0000314"/>
    <property type="project" value="UniProtKB"/>
</dbReference>
<dbReference type="GO" id="GO:0007189">
    <property type="term" value="P:adenylate cyclase-activating G protein-coupled receptor signaling pathway"/>
    <property type="evidence" value="ECO:0000314"/>
    <property type="project" value="UniProtKB"/>
</dbReference>
<dbReference type="GO" id="GO:0007166">
    <property type="term" value="P:cell surface receptor signaling pathway"/>
    <property type="evidence" value="ECO:0007669"/>
    <property type="project" value="InterPro"/>
</dbReference>
<dbReference type="FunFam" id="1.20.1070.10:FF:000249">
    <property type="entry name" value="Adhesion G protein-coupled receptor G5"/>
    <property type="match status" value="1"/>
</dbReference>
<dbReference type="FunFam" id="2.60.220.50:FF:000026">
    <property type="entry name" value="Adhesion G protein-coupled receptor G5"/>
    <property type="match status" value="1"/>
</dbReference>
<dbReference type="Gene3D" id="2.60.220.50">
    <property type="match status" value="1"/>
</dbReference>
<dbReference type="Gene3D" id="1.20.1070.10">
    <property type="entry name" value="Rhodopsin 7-helix transmembrane proteins"/>
    <property type="match status" value="1"/>
</dbReference>
<dbReference type="InterPro" id="IPR057244">
    <property type="entry name" value="GAIN_B"/>
</dbReference>
<dbReference type="InterPro" id="IPR046338">
    <property type="entry name" value="GAIN_dom_sf"/>
</dbReference>
<dbReference type="InterPro" id="IPR017981">
    <property type="entry name" value="GPCR_2-like_7TM"/>
</dbReference>
<dbReference type="InterPro" id="IPR000832">
    <property type="entry name" value="GPCR_2_secretin-like"/>
</dbReference>
<dbReference type="InterPro" id="IPR003910">
    <property type="entry name" value="GPR1/GPR3/GPR5"/>
</dbReference>
<dbReference type="InterPro" id="IPR000203">
    <property type="entry name" value="GPS"/>
</dbReference>
<dbReference type="PANTHER" id="PTHR12011">
    <property type="entry name" value="ADHESION G-PROTEIN COUPLED RECEPTOR"/>
    <property type="match status" value="1"/>
</dbReference>
<dbReference type="PANTHER" id="PTHR12011:SF326">
    <property type="entry name" value="ADHESION G-PROTEIN COUPLED RECEPTOR G5"/>
    <property type="match status" value="1"/>
</dbReference>
<dbReference type="Pfam" id="PF00002">
    <property type="entry name" value="7tm_2"/>
    <property type="match status" value="1"/>
</dbReference>
<dbReference type="Pfam" id="PF01825">
    <property type="entry name" value="GPS"/>
    <property type="match status" value="1"/>
</dbReference>
<dbReference type="PRINTS" id="PR00249">
    <property type="entry name" value="GPCRSECRETIN"/>
</dbReference>
<dbReference type="PRINTS" id="PR01422">
    <property type="entry name" value="GPR56ORPHANR"/>
</dbReference>
<dbReference type="SMART" id="SM00303">
    <property type="entry name" value="GPS"/>
    <property type="match status" value="1"/>
</dbReference>
<dbReference type="PROSITE" id="PS50261">
    <property type="entry name" value="G_PROTEIN_RECEP_F2_4"/>
    <property type="match status" value="1"/>
</dbReference>
<dbReference type="PROSITE" id="PS50221">
    <property type="entry name" value="GAIN_B"/>
    <property type="match status" value="1"/>
</dbReference>
<evidence type="ECO:0000250" key="1">
    <source>
        <dbReference type="UniProtKB" id="Q8IZF4"/>
    </source>
</evidence>
<evidence type="ECO:0000255" key="2"/>
<evidence type="ECO:0000255" key="3">
    <source>
        <dbReference type="PROSITE-ProRule" id="PRU00098"/>
    </source>
</evidence>
<evidence type="ECO:0000269" key="4">
    <source>
    </source>
</evidence>
<evidence type="ECO:0000269" key="5">
    <source>
    </source>
</evidence>
<evidence type="ECO:0000303" key="6">
    <source>
    </source>
</evidence>
<evidence type="ECO:0000305" key="7"/>
<evidence type="ECO:0000305" key="8">
    <source>
    </source>
</evidence>
<evidence type="ECO:0000312" key="9">
    <source>
        <dbReference type="MGI" id="MGI:2685955"/>
    </source>
</evidence>
<protein>
    <recommendedName>
        <fullName evidence="7">Adhesion G-protein coupled receptor G5</fullName>
    </recommendedName>
    <alternativeName>
        <fullName evidence="6">G-protein coupled receptor 114</fullName>
    </alternativeName>
    <alternativeName>
        <fullName>G-protein coupled receptor PGR27</fullName>
    </alternativeName>
    <component>
        <recommendedName>
            <fullName evidence="7">Adhesion G-protein coupled receptor G5, N-terminal fragment</fullName>
            <shortName evidence="7">ADGRG5 N-terminal fragment</shortName>
        </recommendedName>
    </component>
    <component>
        <recommendedName>
            <fullName evidence="7">Adhesion G-protein coupled receptor G5, C-terminal fragment</fullName>
            <shortName evidence="7">ADGRG5 C-terminal fragment</shortName>
        </recommendedName>
    </component>
</protein>
<name>AGRG5_MOUSE</name>
<reference key="1">
    <citation type="journal article" date="2005" name="Science">
        <title>The transcriptional landscape of the mammalian genome.</title>
        <authorList>
            <person name="Carninci P."/>
            <person name="Kasukawa T."/>
            <person name="Katayama S."/>
            <person name="Gough J."/>
            <person name="Frith M.C."/>
            <person name="Maeda N."/>
            <person name="Oyama R."/>
            <person name="Ravasi T."/>
            <person name="Lenhard B."/>
            <person name="Wells C."/>
            <person name="Kodzius R."/>
            <person name="Shimokawa K."/>
            <person name="Bajic V.B."/>
            <person name="Brenner S.E."/>
            <person name="Batalov S."/>
            <person name="Forrest A.R."/>
            <person name="Zavolan M."/>
            <person name="Davis M.J."/>
            <person name="Wilming L.G."/>
            <person name="Aidinis V."/>
            <person name="Allen J.E."/>
            <person name="Ambesi-Impiombato A."/>
            <person name="Apweiler R."/>
            <person name="Aturaliya R.N."/>
            <person name="Bailey T.L."/>
            <person name="Bansal M."/>
            <person name="Baxter L."/>
            <person name="Beisel K.W."/>
            <person name="Bersano T."/>
            <person name="Bono H."/>
            <person name="Chalk A.M."/>
            <person name="Chiu K.P."/>
            <person name="Choudhary V."/>
            <person name="Christoffels A."/>
            <person name="Clutterbuck D.R."/>
            <person name="Crowe M.L."/>
            <person name="Dalla E."/>
            <person name="Dalrymple B.P."/>
            <person name="de Bono B."/>
            <person name="Della Gatta G."/>
            <person name="di Bernardo D."/>
            <person name="Down T."/>
            <person name="Engstrom P."/>
            <person name="Fagiolini M."/>
            <person name="Faulkner G."/>
            <person name="Fletcher C.F."/>
            <person name="Fukushima T."/>
            <person name="Furuno M."/>
            <person name="Futaki S."/>
            <person name="Gariboldi M."/>
            <person name="Georgii-Hemming P."/>
            <person name="Gingeras T.R."/>
            <person name="Gojobori T."/>
            <person name="Green R.E."/>
            <person name="Gustincich S."/>
            <person name="Harbers M."/>
            <person name="Hayashi Y."/>
            <person name="Hensch T.K."/>
            <person name="Hirokawa N."/>
            <person name="Hill D."/>
            <person name="Huminiecki L."/>
            <person name="Iacono M."/>
            <person name="Ikeo K."/>
            <person name="Iwama A."/>
            <person name="Ishikawa T."/>
            <person name="Jakt M."/>
            <person name="Kanapin A."/>
            <person name="Katoh M."/>
            <person name="Kawasawa Y."/>
            <person name="Kelso J."/>
            <person name="Kitamura H."/>
            <person name="Kitano H."/>
            <person name="Kollias G."/>
            <person name="Krishnan S.P."/>
            <person name="Kruger A."/>
            <person name="Kummerfeld S.K."/>
            <person name="Kurochkin I.V."/>
            <person name="Lareau L.F."/>
            <person name="Lazarevic D."/>
            <person name="Lipovich L."/>
            <person name="Liu J."/>
            <person name="Liuni S."/>
            <person name="McWilliam S."/>
            <person name="Madan Babu M."/>
            <person name="Madera M."/>
            <person name="Marchionni L."/>
            <person name="Matsuda H."/>
            <person name="Matsuzawa S."/>
            <person name="Miki H."/>
            <person name="Mignone F."/>
            <person name="Miyake S."/>
            <person name="Morris K."/>
            <person name="Mottagui-Tabar S."/>
            <person name="Mulder N."/>
            <person name="Nakano N."/>
            <person name="Nakauchi H."/>
            <person name="Ng P."/>
            <person name="Nilsson R."/>
            <person name="Nishiguchi S."/>
            <person name="Nishikawa S."/>
            <person name="Nori F."/>
            <person name="Ohara O."/>
            <person name="Okazaki Y."/>
            <person name="Orlando V."/>
            <person name="Pang K.C."/>
            <person name="Pavan W.J."/>
            <person name="Pavesi G."/>
            <person name="Pesole G."/>
            <person name="Petrovsky N."/>
            <person name="Piazza S."/>
            <person name="Reed J."/>
            <person name="Reid J.F."/>
            <person name="Ring B.Z."/>
            <person name="Ringwald M."/>
            <person name="Rost B."/>
            <person name="Ruan Y."/>
            <person name="Salzberg S.L."/>
            <person name="Sandelin A."/>
            <person name="Schneider C."/>
            <person name="Schoenbach C."/>
            <person name="Sekiguchi K."/>
            <person name="Semple C.A."/>
            <person name="Seno S."/>
            <person name="Sessa L."/>
            <person name="Sheng Y."/>
            <person name="Shibata Y."/>
            <person name="Shimada H."/>
            <person name="Shimada K."/>
            <person name="Silva D."/>
            <person name="Sinclair B."/>
            <person name="Sperling S."/>
            <person name="Stupka E."/>
            <person name="Sugiura K."/>
            <person name="Sultana R."/>
            <person name="Takenaka Y."/>
            <person name="Taki K."/>
            <person name="Tammoja K."/>
            <person name="Tan S.L."/>
            <person name="Tang S."/>
            <person name="Taylor M.S."/>
            <person name="Tegner J."/>
            <person name="Teichmann S.A."/>
            <person name="Ueda H.R."/>
            <person name="van Nimwegen E."/>
            <person name="Verardo R."/>
            <person name="Wei C.L."/>
            <person name="Yagi K."/>
            <person name="Yamanishi H."/>
            <person name="Zabarovsky E."/>
            <person name="Zhu S."/>
            <person name="Zimmer A."/>
            <person name="Hide W."/>
            <person name="Bult C."/>
            <person name="Grimmond S.M."/>
            <person name="Teasdale R.D."/>
            <person name="Liu E.T."/>
            <person name="Brusic V."/>
            <person name="Quackenbush J."/>
            <person name="Wahlestedt C."/>
            <person name="Mattick J.S."/>
            <person name="Hume D.A."/>
            <person name="Kai C."/>
            <person name="Sasaki D."/>
            <person name="Tomaru Y."/>
            <person name="Fukuda S."/>
            <person name="Kanamori-Katayama M."/>
            <person name="Suzuki M."/>
            <person name="Aoki J."/>
            <person name="Arakawa T."/>
            <person name="Iida J."/>
            <person name="Imamura K."/>
            <person name="Itoh M."/>
            <person name="Kato T."/>
            <person name="Kawaji H."/>
            <person name="Kawagashira N."/>
            <person name="Kawashima T."/>
            <person name="Kojima M."/>
            <person name="Kondo S."/>
            <person name="Konno H."/>
            <person name="Nakano K."/>
            <person name="Ninomiya N."/>
            <person name="Nishio T."/>
            <person name="Okada M."/>
            <person name="Plessy C."/>
            <person name="Shibata K."/>
            <person name="Shiraki T."/>
            <person name="Suzuki S."/>
            <person name="Tagami M."/>
            <person name="Waki K."/>
            <person name="Watahiki A."/>
            <person name="Okamura-Oho Y."/>
            <person name="Suzuki H."/>
            <person name="Kawai J."/>
            <person name="Hayashizaki Y."/>
        </authorList>
    </citation>
    <scope>NUCLEOTIDE SEQUENCE [LARGE SCALE MRNA] (ISOFORM 2)</scope>
    <source>
        <strain>C57BL/6J</strain>
        <tissue>Skin</tissue>
    </source>
</reference>
<reference key="2">
    <citation type="journal article" date="2009" name="PLoS Biol.">
        <title>Lineage-specific biology revealed by a finished genome assembly of the mouse.</title>
        <authorList>
            <person name="Church D.M."/>
            <person name="Goodstadt L."/>
            <person name="Hillier L.W."/>
            <person name="Zody M.C."/>
            <person name="Goldstein S."/>
            <person name="She X."/>
            <person name="Bult C.J."/>
            <person name="Agarwala R."/>
            <person name="Cherry J.L."/>
            <person name="DiCuccio M."/>
            <person name="Hlavina W."/>
            <person name="Kapustin Y."/>
            <person name="Meric P."/>
            <person name="Maglott D."/>
            <person name="Birtle Z."/>
            <person name="Marques A.C."/>
            <person name="Graves T."/>
            <person name="Zhou S."/>
            <person name="Teague B."/>
            <person name="Potamousis K."/>
            <person name="Churas C."/>
            <person name="Place M."/>
            <person name="Herschleb J."/>
            <person name="Runnheim R."/>
            <person name="Forrest D."/>
            <person name="Amos-Landgraf J."/>
            <person name="Schwartz D.C."/>
            <person name="Cheng Z."/>
            <person name="Lindblad-Toh K."/>
            <person name="Eichler E.E."/>
            <person name="Ponting C.P."/>
        </authorList>
    </citation>
    <scope>NUCLEOTIDE SEQUENCE [LARGE SCALE GENOMIC DNA]</scope>
    <source>
        <strain>C57BL/6J</strain>
    </source>
</reference>
<reference key="3">
    <citation type="submission" date="2005-07" db="EMBL/GenBank/DDBJ databases">
        <authorList>
            <person name="Mural R.J."/>
            <person name="Adams M.D."/>
            <person name="Myers E.W."/>
            <person name="Smith H.O."/>
            <person name="Venter J.C."/>
        </authorList>
    </citation>
    <scope>NUCLEOTIDE SEQUENCE [LARGE SCALE GENOMIC DNA]</scope>
</reference>
<reference key="4">
    <citation type="journal article" date="2004" name="Genome Res.">
        <title>The status, quality, and expansion of the NIH full-length cDNA project: the Mammalian Gene Collection (MGC).</title>
        <authorList>
            <consortium name="The MGC Project Team"/>
        </authorList>
    </citation>
    <scope>NUCLEOTIDE SEQUENCE [LARGE SCALE MRNA] (ISOFORM 1)</scope>
    <source>
        <strain>C57BL/6J</strain>
        <tissue>Thymus</tissue>
    </source>
</reference>
<reference key="5">
    <citation type="journal article" date="2012" name="FEBS Lett.">
        <title>Signaling property study of adhesion G-protein-coupled receptors.</title>
        <authorList>
            <person name="Gupte J."/>
            <person name="Swaminath G."/>
            <person name="Danao J."/>
            <person name="Tian H."/>
            <person name="Li Y."/>
            <person name="Wu X."/>
        </authorList>
    </citation>
    <scope>FUNCTION</scope>
</reference>
<reference key="6">
    <citation type="journal article" date="2015" name="Pharmacol. Rev.">
        <title>International union of basic and clinical pharmacology. XCIV. Adhesion G protein-coupled receptors.</title>
        <authorList>
            <person name="Hamann J."/>
            <person name="Aust G."/>
            <person name="Arac D."/>
            <person name="Engel F.B."/>
            <person name="Formstone C."/>
            <person name="Fredriksson R."/>
            <person name="Hall R.A."/>
            <person name="Harty B.L."/>
            <person name="Kirchhoff C."/>
            <person name="Knapp B."/>
            <person name="Krishnan A."/>
            <person name="Liebscher I."/>
            <person name="Lin H.H."/>
            <person name="Martinelli D.C."/>
            <person name="Monk K.R."/>
            <person name="Peeters M.C."/>
            <person name="Piao X."/>
            <person name="Promel S."/>
            <person name="Schoneberg T."/>
            <person name="Schwartz T.W."/>
            <person name="Singer K."/>
            <person name="Stacey M."/>
            <person name="Ushkaryov Y.A."/>
            <person name="Vallon M."/>
            <person name="Wolfrum U."/>
            <person name="Wright M.W."/>
            <person name="Xu L."/>
            <person name="Langenhan T."/>
            <person name="Schioth H.B."/>
        </authorList>
    </citation>
    <scope>REVIEW</scope>
</reference>
<reference key="7">
    <citation type="journal article" date="2016" name="FASEB J.">
        <title>The constitutive activity of the adhesion GPCR GPR114/ADGRG5 is mediated by its tethered agonist.</title>
        <authorList>
            <person name="Wilde C."/>
            <person name="Fischer L."/>
            <person name="Lede V."/>
            <person name="Kirchberger J."/>
            <person name="Rothemund S."/>
            <person name="Schoeneberg T."/>
            <person name="Liebscher I."/>
        </authorList>
    </citation>
    <scope>FUNCTION</scope>
    <scope>SUBCELLULAR LOCATION</scope>
    <scope>TISSUE SPECIFICITY</scope>
    <scope>MUTAGENESIS OF LEU-222 AND GLN-230</scope>
</reference>
<accession>Q3V3Z3</accession>
<accession>A6H6A1</accession>
<accession>G5E8G8</accession>
<proteinExistence type="evidence at protein level"/>